<feature type="chain" id="PRO_0000383516" description="Probable 4-deoxy-4-formamido-L-arabinose-phosphoundecaprenol deformylase ArnD">
    <location>
        <begin position="1"/>
        <end position="300"/>
    </location>
</feature>
<feature type="domain" description="NodB homology" evidence="1">
    <location>
        <begin position="2"/>
        <end position="260"/>
    </location>
</feature>
<evidence type="ECO:0000255" key="1">
    <source>
        <dbReference type="HAMAP-Rule" id="MF_01870"/>
    </source>
</evidence>
<accession>A6TF97</accession>
<gene>
    <name evidence="1" type="primary">arnD</name>
    <name type="ordered locus">KPN78578_38070</name>
    <name type="ORF">KPN_03844</name>
</gene>
<name>ARND_KLEP7</name>
<reference key="1">
    <citation type="submission" date="2006-09" db="EMBL/GenBank/DDBJ databases">
        <authorList>
            <consortium name="The Klebsiella pneumonia Genome Sequencing Project"/>
            <person name="McClelland M."/>
            <person name="Sanderson E.K."/>
            <person name="Spieth J."/>
            <person name="Clifton W.S."/>
            <person name="Latreille P."/>
            <person name="Sabo A."/>
            <person name="Pepin K."/>
            <person name="Bhonagiri V."/>
            <person name="Porwollik S."/>
            <person name="Ali J."/>
            <person name="Wilson R.K."/>
        </authorList>
    </citation>
    <scope>NUCLEOTIDE SEQUENCE [LARGE SCALE GENOMIC DNA]</scope>
    <source>
        <strain>ATCC 700721 / MGH 78578</strain>
    </source>
</reference>
<keyword id="KW-0046">Antibiotic resistance</keyword>
<keyword id="KW-0378">Hydrolase</keyword>
<keyword id="KW-0441">Lipid A biosynthesis</keyword>
<keyword id="KW-0444">Lipid biosynthesis</keyword>
<keyword id="KW-0443">Lipid metabolism</keyword>
<keyword id="KW-0448">Lipopolysaccharide biosynthesis</keyword>
<comment type="function">
    <text evidence="1">Catalyzes the deformylation of 4-deoxy-4-formamido-L-arabinose-phosphoundecaprenol to 4-amino-4-deoxy-L-arabinose-phosphoundecaprenol. The modified arabinose is attached to lipid A and is required for resistance to polymyxin and cationic antimicrobial peptides.</text>
</comment>
<comment type="catalytic activity">
    <reaction evidence="1">
        <text>4-deoxy-4-formamido-alpha-L-arabinopyranosyl di-trans,octa-cis-undecaprenyl phosphate + H2O = 4-amino-4-deoxy-alpha-L-arabinopyranosyl di-trans,octa-cis-undecaprenyl phosphate + formate</text>
        <dbReference type="Rhea" id="RHEA:27734"/>
        <dbReference type="ChEBI" id="CHEBI:15377"/>
        <dbReference type="ChEBI" id="CHEBI:15740"/>
        <dbReference type="ChEBI" id="CHEBI:58909"/>
        <dbReference type="ChEBI" id="CHEBI:60463"/>
        <dbReference type="EC" id="3.5.1.n3"/>
    </reaction>
</comment>
<comment type="pathway">
    <text evidence="1">Glycolipid biosynthesis; 4-amino-4-deoxy-alpha-L-arabinose undecaprenyl phosphate biosynthesis; 4-amino-4-deoxy-alpha-L-arabinose undecaprenyl phosphate from UDP-4-deoxy-4-formamido-beta-L-arabinose and undecaprenyl phosphate: step 2/2.</text>
</comment>
<comment type="pathway">
    <text evidence="1">Bacterial outer membrane biogenesis; lipopolysaccharide biosynthesis.</text>
</comment>
<comment type="similarity">
    <text evidence="1">Belongs to the polysaccharide deacetylase family. ArnD deformylase subfamily.</text>
</comment>
<proteinExistence type="inferred from homology"/>
<protein>
    <recommendedName>
        <fullName evidence="1">Probable 4-deoxy-4-formamido-L-arabinose-phosphoundecaprenol deformylase ArnD</fullName>
        <ecNumber evidence="1">3.5.1.n3</ecNumber>
    </recommendedName>
</protein>
<dbReference type="EC" id="3.5.1.n3" evidence="1"/>
<dbReference type="EMBL" id="CP000647">
    <property type="protein sequence ID" value="ABR79231.1"/>
    <property type="molecule type" value="Genomic_DNA"/>
</dbReference>
<dbReference type="RefSeq" id="WP_009308746.1">
    <property type="nucleotide sequence ID" value="NC_009648.1"/>
</dbReference>
<dbReference type="SMR" id="A6TF97"/>
<dbReference type="STRING" id="272620.KPN_03844"/>
<dbReference type="PaxDb" id="272620-KPN_03844"/>
<dbReference type="EnsemblBacteria" id="ABR79231">
    <property type="protein sequence ID" value="ABR79231"/>
    <property type="gene ID" value="KPN_03844"/>
</dbReference>
<dbReference type="KEGG" id="kpn:KPN_03844"/>
<dbReference type="HOGENOM" id="CLU_084199_0_0_6"/>
<dbReference type="UniPathway" id="UPA00030"/>
<dbReference type="UniPathway" id="UPA00036">
    <property type="reaction ID" value="UER00496"/>
</dbReference>
<dbReference type="PHI-base" id="PHI:7952"/>
<dbReference type="Proteomes" id="UP000000265">
    <property type="component" value="Chromosome"/>
</dbReference>
<dbReference type="GO" id="GO:0016020">
    <property type="term" value="C:membrane"/>
    <property type="evidence" value="ECO:0007669"/>
    <property type="project" value="GOC"/>
</dbReference>
<dbReference type="GO" id="GO:0016811">
    <property type="term" value="F:hydrolase activity, acting on carbon-nitrogen (but not peptide) bonds, in linear amides"/>
    <property type="evidence" value="ECO:0007669"/>
    <property type="project" value="UniProtKB-UniRule"/>
</dbReference>
<dbReference type="GO" id="GO:0036108">
    <property type="term" value="P:4-amino-4-deoxy-alpha-L-arabinopyranosyl undecaprenyl phosphate biosynthetic process"/>
    <property type="evidence" value="ECO:0007669"/>
    <property type="project" value="UniProtKB-UniRule"/>
</dbReference>
<dbReference type="GO" id="GO:0009245">
    <property type="term" value="P:lipid A biosynthetic process"/>
    <property type="evidence" value="ECO:0007669"/>
    <property type="project" value="UniProtKB-UniRule"/>
</dbReference>
<dbReference type="GO" id="GO:0009103">
    <property type="term" value="P:lipopolysaccharide biosynthetic process"/>
    <property type="evidence" value="ECO:0007669"/>
    <property type="project" value="UniProtKB-UniRule"/>
</dbReference>
<dbReference type="GO" id="GO:0046677">
    <property type="term" value="P:response to antibiotic"/>
    <property type="evidence" value="ECO:0007669"/>
    <property type="project" value="UniProtKB-KW"/>
</dbReference>
<dbReference type="Gene3D" id="3.20.20.370">
    <property type="entry name" value="Glycoside hydrolase/deacetylase"/>
    <property type="match status" value="1"/>
</dbReference>
<dbReference type="HAMAP" id="MF_01870">
    <property type="entry name" value="ArnD"/>
    <property type="match status" value="1"/>
</dbReference>
<dbReference type="InterPro" id="IPR023557">
    <property type="entry name" value="ArnD"/>
</dbReference>
<dbReference type="InterPro" id="IPR011330">
    <property type="entry name" value="Glyco_hydro/deAcase_b/a-brl"/>
</dbReference>
<dbReference type="InterPro" id="IPR002509">
    <property type="entry name" value="NODB_dom"/>
</dbReference>
<dbReference type="NCBIfam" id="NF011923">
    <property type="entry name" value="PRK15394.1"/>
    <property type="match status" value="1"/>
</dbReference>
<dbReference type="Pfam" id="PF01522">
    <property type="entry name" value="Polysacc_deac_1"/>
    <property type="match status" value="1"/>
</dbReference>
<dbReference type="SUPFAM" id="SSF88713">
    <property type="entry name" value="Glycoside hydrolase/deacetylase"/>
    <property type="match status" value="1"/>
</dbReference>
<dbReference type="PROSITE" id="PS51677">
    <property type="entry name" value="NODB"/>
    <property type="match status" value="1"/>
</dbReference>
<organism>
    <name type="scientific">Klebsiella pneumoniae subsp. pneumoniae (strain ATCC 700721 / MGH 78578)</name>
    <dbReference type="NCBI Taxonomy" id="272620"/>
    <lineage>
        <taxon>Bacteria</taxon>
        <taxon>Pseudomonadati</taxon>
        <taxon>Pseudomonadota</taxon>
        <taxon>Gammaproteobacteria</taxon>
        <taxon>Enterobacterales</taxon>
        <taxon>Enterobacteriaceae</taxon>
        <taxon>Klebsiella/Raoultella group</taxon>
        <taxon>Klebsiella</taxon>
        <taxon>Klebsiella pneumoniae complex</taxon>
    </lineage>
</organism>
<sequence>MKQVGLRIDVDTFRGTRDGVPRLLELLGRHGIQASFFFSVGPDNMGRHLWRLVKPKFLWKMLRSRAASLYGWDILLAGTAWPGRRIGAGNEAVIRAAAESHEVGLHAWDHYSWQAWSGVWPQERLALEVERGLLELERIIGRPVTCSAVAGWRADQRVVKAKESFDFLYNSDCRGTRPFLPQLGSGVSGTVQIPVTLPTWDEAVGTAVDIAGFNRYLLDCIHRDAGVPVYTIHAEVEGIAYADQFNELLTMAAEEEIQFCPLSQLLPADFSELPSGKVVRGELAGREGWLGREQLLTSGI</sequence>